<comment type="function">
    <text evidence="1">Participates actively in the response to hyperosmotic and heat shock by preventing the aggregation of stress-denatured proteins, in association with DnaK and GrpE. It is the nucleotide exchange factor for DnaK and may function as a thermosensor. Unfolded proteins bind initially to DnaJ; upon interaction with the DnaJ-bound protein, DnaK hydrolyzes its bound ATP, resulting in the formation of a stable complex. GrpE releases ADP from DnaK; ATP binding to DnaK triggers the release of the substrate protein, thus completing the reaction cycle. Several rounds of ATP-dependent interactions between DnaJ, DnaK and GrpE are required for fully efficient folding.</text>
</comment>
<comment type="subunit">
    <text evidence="1">Homodimer.</text>
</comment>
<comment type="subcellular location">
    <subcellularLocation>
        <location evidence="1">Cytoplasm</location>
    </subcellularLocation>
</comment>
<comment type="similarity">
    <text evidence="1">Belongs to the GrpE family.</text>
</comment>
<proteinExistence type="inferred from homology"/>
<protein>
    <recommendedName>
        <fullName evidence="1">Protein GrpE</fullName>
    </recommendedName>
    <alternativeName>
        <fullName evidence="1">HSP-70 cofactor</fullName>
    </alternativeName>
</protein>
<dbReference type="EMBL" id="CP000439">
    <property type="protein sequence ID" value="ABK90166.1"/>
    <property type="molecule type" value="Genomic_DNA"/>
</dbReference>
<dbReference type="RefSeq" id="WP_003040067.1">
    <property type="nucleotide sequence ID" value="NC_008601.1"/>
</dbReference>
<dbReference type="SMR" id="A0Q7F1"/>
<dbReference type="KEGG" id="ftn:FTN_1285"/>
<dbReference type="KEGG" id="ftx:AW25_721"/>
<dbReference type="BioCyc" id="FTUL401614:G1G75-1330-MONOMER"/>
<dbReference type="Proteomes" id="UP000000762">
    <property type="component" value="Chromosome"/>
</dbReference>
<dbReference type="GO" id="GO:0005829">
    <property type="term" value="C:cytosol"/>
    <property type="evidence" value="ECO:0007669"/>
    <property type="project" value="TreeGrafter"/>
</dbReference>
<dbReference type="GO" id="GO:0000774">
    <property type="term" value="F:adenyl-nucleotide exchange factor activity"/>
    <property type="evidence" value="ECO:0007669"/>
    <property type="project" value="InterPro"/>
</dbReference>
<dbReference type="GO" id="GO:0042803">
    <property type="term" value="F:protein homodimerization activity"/>
    <property type="evidence" value="ECO:0007669"/>
    <property type="project" value="InterPro"/>
</dbReference>
<dbReference type="GO" id="GO:0051087">
    <property type="term" value="F:protein-folding chaperone binding"/>
    <property type="evidence" value="ECO:0007669"/>
    <property type="project" value="InterPro"/>
</dbReference>
<dbReference type="GO" id="GO:0051082">
    <property type="term" value="F:unfolded protein binding"/>
    <property type="evidence" value="ECO:0007669"/>
    <property type="project" value="TreeGrafter"/>
</dbReference>
<dbReference type="GO" id="GO:0006457">
    <property type="term" value="P:protein folding"/>
    <property type="evidence" value="ECO:0007669"/>
    <property type="project" value="InterPro"/>
</dbReference>
<dbReference type="CDD" id="cd00446">
    <property type="entry name" value="GrpE"/>
    <property type="match status" value="1"/>
</dbReference>
<dbReference type="FunFam" id="2.30.22.10:FF:000001">
    <property type="entry name" value="Protein GrpE"/>
    <property type="match status" value="1"/>
</dbReference>
<dbReference type="Gene3D" id="3.90.20.20">
    <property type="match status" value="1"/>
</dbReference>
<dbReference type="Gene3D" id="2.30.22.10">
    <property type="entry name" value="Head domain of nucleotide exchange factor GrpE"/>
    <property type="match status" value="1"/>
</dbReference>
<dbReference type="HAMAP" id="MF_01151">
    <property type="entry name" value="GrpE"/>
    <property type="match status" value="1"/>
</dbReference>
<dbReference type="InterPro" id="IPR000740">
    <property type="entry name" value="GrpE"/>
</dbReference>
<dbReference type="InterPro" id="IPR013805">
    <property type="entry name" value="GrpE_coiled_coil"/>
</dbReference>
<dbReference type="InterPro" id="IPR009012">
    <property type="entry name" value="GrpE_head"/>
</dbReference>
<dbReference type="NCBIfam" id="NF010737">
    <property type="entry name" value="PRK14139.1"/>
    <property type="match status" value="1"/>
</dbReference>
<dbReference type="NCBIfam" id="NF010738">
    <property type="entry name" value="PRK14140.1"/>
    <property type="match status" value="1"/>
</dbReference>
<dbReference type="NCBIfam" id="NF010746">
    <property type="entry name" value="PRK14148.1"/>
    <property type="match status" value="1"/>
</dbReference>
<dbReference type="NCBIfam" id="NF010748">
    <property type="entry name" value="PRK14150.1"/>
    <property type="match status" value="1"/>
</dbReference>
<dbReference type="PANTHER" id="PTHR21237">
    <property type="entry name" value="GRPE PROTEIN"/>
    <property type="match status" value="1"/>
</dbReference>
<dbReference type="PANTHER" id="PTHR21237:SF23">
    <property type="entry name" value="GRPE PROTEIN HOMOLOG, MITOCHONDRIAL"/>
    <property type="match status" value="1"/>
</dbReference>
<dbReference type="Pfam" id="PF01025">
    <property type="entry name" value="GrpE"/>
    <property type="match status" value="1"/>
</dbReference>
<dbReference type="PRINTS" id="PR00773">
    <property type="entry name" value="GRPEPROTEIN"/>
</dbReference>
<dbReference type="SUPFAM" id="SSF58014">
    <property type="entry name" value="Coiled-coil domain of nucleotide exchange factor GrpE"/>
    <property type="match status" value="1"/>
</dbReference>
<dbReference type="SUPFAM" id="SSF51064">
    <property type="entry name" value="Head domain of nucleotide exchange factor GrpE"/>
    <property type="match status" value="1"/>
</dbReference>
<dbReference type="PROSITE" id="PS01071">
    <property type="entry name" value="GRPE"/>
    <property type="match status" value="1"/>
</dbReference>
<evidence type="ECO:0000255" key="1">
    <source>
        <dbReference type="HAMAP-Rule" id="MF_01151"/>
    </source>
</evidence>
<reference key="1">
    <citation type="journal article" date="2007" name="Genome Biol.">
        <title>Comparison of Francisella tularensis genomes reveals evolutionary events associated with the emergence of human pathogenic strains.</title>
        <authorList>
            <person name="Rohmer L."/>
            <person name="Fong C."/>
            <person name="Abmayr S."/>
            <person name="Wasnick M."/>
            <person name="Larson Freeman T.J."/>
            <person name="Radey M."/>
            <person name="Guina T."/>
            <person name="Svensson K."/>
            <person name="Hayden H.S."/>
            <person name="Jacobs M."/>
            <person name="Gallagher L.A."/>
            <person name="Manoil C."/>
            <person name="Ernst R.K."/>
            <person name="Drees B."/>
            <person name="Buckley D."/>
            <person name="Haugen E."/>
            <person name="Bovee D."/>
            <person name="Zhou Y."/>
            <person name="Chang J."/>
            <person name="Levy R."/>
            <person name="Lim R."/>
            <person name="Gillett W."/>
            <person name="Guenthener D."/>
            <person name="Kang A."/>
            <person name="Shaffer S.A."/>
            <person name="Taylor G."/>
            <person name="Chen J."/>
            <person name="Gallis B."/>
            <person name="D'Argenio D.A."/>
            <person name="Forsman M."/>
            <person name="Olson M.V."/>
            <person name="Goodlett D.R."/>
            <person name="Kaul R."/>
            <person name="Miller S.I."/>
            <person name="Brittnacher M.J."/>
        </authorList>
    </citation>
    <scope>NUCLEOTIDE SEQUENCE [LARGE SCALE GENOMIC DNA]</scope>
    <source>
        <strain>U112</strain>
    </source>
</reference>
<name>GRPE_FRATN</name>
<feature type="chain" id="PRO_1000053582" description="Protein GrpE">
    <location>
        <begin position="1"/>
        <end position="195"/>
    </location>
</feature>
<keyword id="KW-0143">Chaperone</keyword>
<keyword id="KW-0963">Cytoplasm</keyword>
<keyword id="KW-0346">Stress response</keyword>
<gene>
    <name evidence="1" type="primary">grpE</name>
    <name type="ordered locus">FTN_1285</name>
</gene>
<sequence>MSKQEKSNVEDKSLDIETAAQVETAQESASGALEELSVEEQLERAKDTIKELEDSCDQFKDEALRAKAEMENIRKRAERDVSNARKFGIEKFAKELLPVIDSIEQALKHEVKLEEAIAMKEGIELTAKMLVDILKKNGVEELHPKGEKFDPNLHEAMAMIPNPEFEDNTIFDVFQKGYMLNGRIVRAAKVVIVKN</sequence>
<organism>
    <name type="scientific">Francisella tularensis subsp. novicida (strain U112)</name>
    <dbReference type="NCBI Taxonomy" id="401614"/>
    <lineage>
        <taxon>Bacteria</taxon>
        <taxon>Pseudomonadati</taxon>
        <taxon>Pseudomonadota</taxon>
        <taxon>Gammaproteobacteria</taxon>
        <taxon>Thiotrichales</taxon>
        <taxon>Francisellaceae</taxon>
        <taxon>Francisella</taxon>
    </lineage>
</organism>
<accession>A0Q7F1</accession>